<organism>
    <name type="scientific">Ralstonia nicotianae (strain ATCC BAA-1114 / GMI1000)</name>
    <name type="common">Ralstonia solanacearum</name>
    <dbReference type="NCBI Taxonomy" id="267608"/>
    <lineage>
        <taxon>Bacteria</taxon>
        <taxon>Pseudomonadati</taxon>
        <taxon>Pseudomonadota</taxon>
        <taxon>Betaproteobacteria</taxon>
        <taxon>Burkholderiales</taxon>
        <taxon>Burkholderiaceae</taxon>
        <taxon>Ralstonia</taxon>
        <taxon>Ralstonia solanacearum species complex</taxon>
    </lineage>
</organism>
<dbReference type="EMBL" id="AL646052">
    <property type="protein sequence ID" value="CAD14241.1"/>
    <property type="status" value="ALT_INIT"/>
    <property type="molecule type" value="Genomic_DNA"/>
</dbReference>
<dbReference type="RefSeq" id="WP_016727115.1">
    <property type="nucleotide sequence ID" value="NC_003295.1"/>
</dbReference>
<dbReference type="SMR" id="Q8Y1H9"/>
<dbReference type="STRING" id="267608.RSc0711"/>
<dbReference type="EnsemblBacteria" id="CAD14241">
    <property type="protein sequence ID" value="CAD14241"/>
    <property type="gene ID" value="RSc0711"/>
</dbReference>
<dbReference type="KEGG" id="rso:RSc0711"/>
<dbReference type="eggNOG" id="COG0781">
    <property type="taxonomic scope" value="Bacteria"/>
</dbReference>
<dbReference type="HOGENOM" id="CLU_087843_4_1_4"/>
<dbReference type="Proteomes" id="UP000001436">
    <property type="component" value="Chromosome"/>
</dbReference>
<dbReference type="GO" id="GO:0005829">
    <property type="term" value="C:cytosol"/>
    <property type="evidence" value="ECO:0007669"/>
    <property type="project" value="TreeGrafter"/>
</dbReference>
<dbReference type="GO" id="GO:0003723">
    <property type="term" value="F:RNA binding"/>
    <property type="evidence" value="ECO:0007669"/>
    <property type="project" value="UniProtKB-UniRule"/>
</dbReference>
<dbReference type="GO" id="GO:0006353">
    <property type="term" value="P:DNA-templated transcription termination"/>
    <property type="evidence" value="ECO:0007669"/>
    <property type="project" value="UniProtKB-UniRule"/>
</dbReference>
<dbReference type="GO" id="GO:0031564">
    <property type="term" value="P:transcription antitermination"/>
    <property type="evidence" value="ECO:0007669"/>
    <property type="project" value="UniProtKB-KW"/>
</dbReference>
<dbReference type="Gene3D" id="1.10.940.10">
    <property type="entry name" value="NusB-like"/>
    <property type="match status" value="1"/>
</dbReference>
<dbReference type="HAMAP" id="MF_00073">
    <property type="entry name" value="NusB"/>
    <property type="match status" value="1"/>
</dbReference>
<dbReference type="InterPro" id="IPR035926">
    <property type="entry name" value="NusB-like_sf"/>
</dbReference>
<dbReference type="InterPro" id="IPR011605">
    <property type="entry name" value="NusB_fam"/>
</dbReference>
<dbReference type="InterPro" id="IPR006027">
    <property type="entry name" value="NusB_RsmB_TIM44"/>
</dbReference>
<dbReference type="NCBIfam" id="TIGR01951">
    <property type="entry name" value="nusB"/>
    <property type="match status" value="1"/>
</dbReference>
<dbReference type="PANTHER" id="PTHR11078:SF3">
    <property type="entry name" value="ANTITERMINATION NUSB DOMAIN-CONTAINING PROTEIN"/>
    <property type="match status" value="1"/>
</dbReference>
<dbReference type="PANTHER" id="PTHR11078">
    <property type="entry name" value="N UTILIZATION SUBSTANCE PROTEIN B-RELATED"/>
    <property type="match status" value="1"/>
</dbReference>
<dbReference type="Pfam" id="PF01029">
    <property type="entry name" value="NusB"/>
    <property type="match status" value="1"/>
</dbReference>
<dbReference type="SUPFAM" id="SSF48013">
    <property type="entry name" value="NusB-like"/>
    <property type="match status" value="1"/>
</dbReference>
<accession>Q8Y1H9</accession>
<keyword id="KW-1185">Reference proteome</keyword>
<keyword id="KW-0694">RNA-binding</keyword>
<keyword id="KW-0804">Transcription</keyword>
<keyword id="KW-0889">Transcription antitermination</keyword>
<keyword id="KW-0805">Transcription regulation</keyword>
<proteinExistence type="inferred from homology"/>
<sequence>MTQDNSPAKPKAPPKSARRRARELALQGLYQWLLNRNDPGVVEAHLHDAQGFNKADRAHFDALLHGAIREEATLTESFTPFLDRPVAELSPVERAALLVGAYELVHCVDIPYKVVINEAVELAKTFGGVEGYKYVNGVLDKLAAQVRAVEVAARR</sequence>
<name>NUSB_RALN1</name>
<comment type="function">
    <text evidence="1">Involved in transcription antitermination. Required for transcription of ribosomal RNA (rRNA) genes. Binds specifically to the boxA antiterminator sequence of the ribosomal RNA (rrn) operons.</text>
</comment>
<comment type="similarity">
    <text evidence="1 2">Belongs to the NusB family.</text>
</comment>
<comment type="sequence caution" evidence="2">
    <conflict type="erroneous initiation">
        <sequence resource="EMBL-CDS" id="CAD14241"/>
    </conflict>
</comment>
<gene>
    <name evidence="1" type="primary">nusB</name>
    <name type="ordered locus">RSc0711</name>
    <name type="ORF">RS05142</name>
</gene>
<feature type="chain" id="PRO_0000176567" description="Transcription antitermination protein NusB">
    <location>
        <begin position="1"/>
        <end position="155"/>
    </location>
</feature>
<reference key="1">
    <citation type="journal article" date="2002" name="Nature">
        <title>Genome sequence of the plant pathogen Ralstonia solanacearum.</title>
        <authorList>
            <person name="Salanoubat M."/>
            <person name="Genin S."/>
            <person name="Artiguenave F."/>
            <person name="Gouzy J."/>
            <person name="Mangenot S."/>
            <person name="Arlat M."/>
            <person name="Billault A."/>
            <person name="Brottier P."/>
            <person name="Camus J.-C."/>
            <person name="Cattolico L."/>
            <person name="Chandler M."/>
            <person name="Choisne N."/>
            <person name="Claudel-Renard C."/>
            <person name="Cunnac S."/>
            <person name="Demange N."/>
            <person name="Gaspin C."/>
            <person name="Lavie M."/>
            <person name="Moisan A."/>
            <person name="Robert C."/>
            <person name="Saurin W."/>
            <person name="Schiex T."/>
            <person name="Siguier P."/>
            <person name="Thebault P."/>
            <person name="Whalen M."/>
            <person name="Wincker P."/>
            <person name="Levy M."/>
            <person name="Weissenbach J."/>
            <person name="Boucher C.A."/>
        </authorList>
    </citation>
    <scope>NUCLEOTIDE SEQUENCE [LARGE SCALE GENOMIC DNA]</scope>
    <source>
        <strain>ATCC BAA-1114 / GMI1000</strain>
    </source>
</reference>
<protein>
    <recommendedName>
        <fullName evidence="1">Transcription antitermination protein NusB</fullName>
    </recommendedName>
    <alternativeName>
        <fullName evidence="1">Antitermination factor NusB</fullName>
    </alternativeName>
</protein>
<evidence type="ECO:0000255" key="1">
    <source>
        <dbReference type="HAMAP-Rule" id="MF_00073"/>
    </source>
</evidence>
<evidence type="ECO:0000305" key="2"/>